<evidence type="ECO:0000250" key="1"/>
<evidence type="ECO:0000250" key="2">
    <source>
        <dbReference type="UniProtKB" id="Q9GZY6"/>
    </source>
</evidence>
<evidence type="ECO:0000250" key="3">
    <source>
        <dbReference type="UniProtKB" id="Q9JHL0"/>
    </source>
</evidence>
<evidence type="ECO:0000255" key="4"/>
<evidence type="ECO:0000256" key="5">
    <source>
        <dbReference type="SAM" id="MobiDB-lite"/>
    </source>
</evidence>
<proteinExistence type="evidence at transcript level"/>
<keyword id="KW-1064">Adaptive immunity</keyword>
<keyword id="KW-1003">Cell membrane</keyword>
<keyword id="KW-0391">Immunity</keyword>
<keyword id="KW-0449">Lipoprotein</keyword>
<keyword id="KW-0467">Mast cell degranulation</keyword>
<keyword id="KW-0472">Membrane</keyword>
<keyword id="KW-0564">Palmitate</keyword>
<keyword id="KW-0597">Phosphoprotein</keyword>
<keyword id="KW-1185">Reference proteome</keyword>
<keyword id="KW-0735">Signal-anchor</keyword>
<keyword id="KW-0812">Transmembrane</keyword>
<keyword id="KW-1133">Transmembrane helix</keyword>
<reference key="1">
    <citation type="submission" date="2002-10" db="EMBL/GenBank/DDBJ databases">
        <authorList>
            <person name="Tumova M."/>
            <person name="Luskova P."/>
            <person name="Draber P."/>
        </authorList>
    </citation>
    <scope>NUCLEOTIDE SEQUENCE [MRNA]</scope>
    <source>
        <strain>Wistar</strain>
    </source>
</reference>
<comment type="function">
    <text evidence="1">Involved in FCER1 (high affinity immunoglobulin epsilon receptor)-mediated signaling in mast cells. May also be involved in BCR (B-cell antigen receptor)-mediated signaling in B-cells and FCGR1 (high affinity immunoglobulin gamma Fc receptor I)-mediated signaling in myeloid cells. Couples activation of these receptors and their associated kinases with distal intracellular events through the recruitment of GRB2 (By similarity).</text>
</comment>
<comment type="subunit">
    <text evidence="1">When phosphorylated, interacts with GRB2. May also interact with SOS1, GAB1 and CBL (By similarity).</text>
</comment>
<comment type="subcellular location">
    <subcellularLocation>
        <location evidence="1">Cell membrane</location>
        <topology evidence="1">Single-pass type III membrane protein</topology>
    </subcellularLocation>
    <text evidence="1">Present in lipid rafts.</text>
</comment>
<comment type="PTM">
    <text>Phosphorylated on tyrosines following cross-linking of BCR in B-cells, high affinity IgG receptor (FCGR1) in myeloid cells, or high affinity IgE receptor (FCER1) in mast cells; which induces the recruitment of GRB2.</text>
</comment>
<gene>
    <name type="primary">Lat2</name>
    <name type="synonym">Lab</name>
    <name type="synonym">Ntal</name>
    <name type="synonym">Wbscr5</name>
</gene>
<organism>
    <name type="scientific">Rattus norvegicus</name>
    <name type="common">Rat</name>
    <dbReference type="NCBI Taxonomy" id="10116"/>
    <lineage>
        <taxon>Eukaryota</taxon>
        <taxon>Metazoa</taxon>
        <taxon>Chordata</taxon>
        <taxon>Craniata</taxon>
        <taxon>Vertebrata</taxon>
        <taxon>Euteleostomi</taxon>
        <taxon>Mammalia</taxon>
        <taxon>Eutheria</taxon>
        <taxon>Euarchontoglires</taxon>
        <taxon>Glires</taxon>
        <taxon>Rodentia</taxon>
        <taxon>Myomorpha</taxon>
        <taxon>Muroidea</taxon>
        <taxon>Muridae</taxon>
        <taxon>Murinae</taxon>
        <taxon>Rattus</taxon>
    </lineage>
</organism>
<name>NTAL_RAT</name>
<dbReference type="EMBL" id="AY170849">
    <property type="protein sequence ID" value="AAO12808.1"/>
    <property type="molecule type" value="mRNA"/>
</dbReference>
<dbReference type="RefSeq" id="NP_776212.1">
    <property type="nucleotide sequence ID" value="NM_173840.1"/>
</dbReference>
<dbReference type="FunCoup" id="Q8CGL2">
    <property type="interactions" value="299"/>
</dbReference>
<dbReference type="STRING" id="10116.ENSRNOP00000031304"/>
<dbReference type="PhosphoSitePlus" id="Q8CGL2"/>
<dbReference type="PaxDb" id="10116-ENSRNOP00000031304"/>
<dbReference type="GeneID" id="317676"/>
<dbReference type="KEGG" id="rno:317676"/>
<dbReference type="UCSC" id="RGD:631397">
    <property type="organism name" value="rat"/>
</dbReference>
<dbReference type="AGR" id="RGD:631397"/>
<dbReference type="CTD" id="7462"/>
<dbReference type="RGD" id="631397">
    <property type="gene designation" value="Lat2"/>
</dbReference>
<dbReference type="eggNOG" id="ENOG502SH0N">
    <property type="taxonomic scope" value="Eukaryota"/>
</dbReference>
<dbReference type="InParanoid" id="Q8CGL2"/>
<dbReference type="PhylomeDB" id="Q8CGL2"/>
<dbReference type="Reactome" id="R-RNO-2730905">
    <property type="pathway name" value="Role of LAT2/NTAL/LAB on calcium mobilization"/>
</dbReference>
<dbReference type="PRO" id="PR:Q8CGL2"/>
<dbReference type="Proteomes" id="UP000002494">
    <property type="component" value="Unplaced"/>
</dbReference>
<dbReference type="GO" id="GO:0045121">
    <property type="term" value="C:membrane raft"/>
    <property type="evidence" value="ECO:0000266"/>
    <property type="project" value="RGD"/>
</dbReference>
<dbReference type="GO" id="GO:0005886">
    <property type="term" value="C:plasma membrane"/>
    <property type="evidence" value="ECO:0000318"/>
    <property type="project" value="GO_Central"/>
</dbReference>
<dbReference type="GO" id="GO:0042169">
    <property type="term" value="F:SH2 domain binding"/>
    <property type="evidence" value="ECO:0000266"/>
    <property type="project" value="RGD"/>
</dbReference>
<dbReference type="GO" id="GO:0002250">
    <property type="term" value="P:adaptive immune response"/>
    <property type="evidence" value="ECO:0007669"/>
    <property type="project" value="UniProtKB-KW"/>
</dbReference>
<dbReference type="GO" id="GO:0042113">
    <property type="term" value="P:B cell activation"/>
    <property type="evidence" value="ECO:0000266"/>
    <property type="project" value="RGD"/>
</dbReference>
<dbReference type="GO" id="GO:0050853">
    <property type="term" value="P:B cell receptor signaling pathway"/>
    <property type="evidence" value="ECO:0000266"/>
    <property type="project" value="RGD"/>
</dbReference>
<dbReference type="GO" id="GO:0019722">
    <property type="term" value="P:calcium-mediated signaling"/>
    <property type="evidence" value="ECO:0000266"/>
    <property type="project" value="RGD"/>
</dbReference>
<dbReference type="GO" id="GO:0035556">
    <property type="term" value="P:intracellular signal transduction"/>
    <property type="evidence" value="ECO:0000266"/>
    <property type="project" value="RGD"/>
</dbReference>
<dbReference type="GO" id="GO:0043303">
    <property type="term" value="P:mast cell degranulation"/>
    <property type="evidence" value="ECO:0007669"/>
    <property type="project" value="UniProtKB-KW"/>
</dbReference>
<dbReference type="InterPro" id="IPR031428">
    <property type="entry name" value="LAT2"/>
</dbReference>
<dbReference type="PANTHER" id="PTHR15646">
    <property type="entry name" value="LINKER FOR ACTIVATION OF T-CELLS FAMILY MEMBER 2"/>
    <property type="match status" value="1"/>
</dbReference>
<dbReference type="PANTHER" id="PTHR15646:SF5">
    <property type="entry name" value="LINKER FOR ACTIVATION OF T-CELLS FAMILY MEMBER 2"/>
    <property type="match status" value="1"/>
</dbReference>
<dbReference type="Pfam" id="PF15703">
    <property type="entry name" value="LAT2"/>
    <property type="match status" value="1"/>
</dbReference>
<feature type="chain" id="PRO_0000083336" description="Linker for activation of T-cells family member 2">
    <location>
        <begin position="1"/>
        <end position="204"/>
    </location>
</feature>
<feature type="topological domain" description="Extracellular" evidence="4">
    <location>
        <begin position="1"/>
        <end position="7"/>
    </location>
</feature>
<feature type="transmembrane region" description="Helical; Signal-anchor for type III membrane protein" evidence="4">
    <location>
        <begin position="8"/>
        <end position="28"/>
    </location>
</feature>
<feature type="topological domain" description="Cytoplasmic" evidence="4">
    <location>
        <begin position="29"/>
        <end position="204"/>
    </location>
</feature>
<feature type="region of interest" description="Disordered" evidence="5">
    <location>
        <begin position="147"/>
        <end position="204"/>
    </location>
</feature>
<feature type="modified residue" description="Phosphotyrosine" evidence="3">
    <location>
        <position position="60"/>
    </location>
</feature>
<feature type="modified residue" description="Phosphoserine" evidence="3">
    <location>
        <position position="61"/>
    </location>
</feature>
<feature type="modified residue" description="Phosphoserine" evidence="3">
    <location>
        <position position="96"/>
    </location>
</feature>
<feature type="modified residue" description="Phosphotyrosine" evidence="2">
    <location>
        <position position="140"/>
    </location>
</feature>
<feature type="modified residue" description="Phosphotyrosine" evidence="2">
    <location>
        <position position="161"/>
    </location>
</feature>
<feature type="modified residue" description="Phosphotyrosine" evidence="2">
    <location>
        <position position="193"/>
    </location>
</feature>
<feature type="lipid moiety-binding region" description="S-palmitoyl cysteine" evidence="1">
    <location>
        <position position="27"/>
    </location>
</feature>
<feature type="lipid moiety-binding region" description="S-palmitoyl cysteine" evidence="1">
    <location>
        <position position="30"/>
    </location>
</feature>
<accession>Q8CGL2</accession>
<sequence>MNAELELLWPLSGLLLLLLLGTTAWLCVQCSRPGVKRNEKIYEQRNQQENEQSVASSQTYSLARPVRTGLQMDAASNKSFERKNKLLFSHLEGPESPRYQNFYKGSRRESDAAYVDPIPTDYYNWGCFQKPPEDNDSNSYENVLICKPSTPESGTEESEDYQNSVSILQWRESKRTMGARTSPSGSPDEEPDYVNGDVATTEKI</sequence>
<protein>
    <recommendedName>
        <fullName>Linker for activation of T-cells family member 2</fullName>
    </recommendedName>
    <alternativeName>
        <fullName>Linker for activation of B-cells</fullName>
    </alternativeName>
    <alternativeName>
        <fullName>Non-T-cell activation linker</fullName>
    </alternativeName>
</protein>